<organism>
    <name type="scientific">Syntrophotalea carbinolica (strain DSM 2380 / NBRC 103641 / GraBd1)</name>
    <name type="common">Pelobacter carbinolicus</name>
    <dbReference type="NCBI Taxonomy" id="338963"/>
    <lineage>
        <taxon>Bacteria</taxon>
        <taxon>Pseudomonadati</taxon>
        <taxon>Thermodesulfobacteriota</taxon>
        <taxon>Desulfuromonadia</taxon>
        <taxon>Desulfuromonadales</taxon>
        <taxon>Syntrophotaleaceae</taxon>
        <taxon>Syntrophotalea</taxon>
    </lineage>
</organism>
<proteinExistence type="inferred from homology"/>
<feature type="chain" id="PRO_0000255204" description="Lipid-A-disaccharide synthase">
    <location>
        <begin position="1"/>
        <end position="392"/>
    </location>
</feature>
<keyword id="KW-0328">Glycosyltransferase</keyword>
<keyword id="KW-0441">Lipid A biosynthesis</keyword>
<keyword id="KW-0444">Lipid biosynthesis</keyword>
<keyword id="KW-0443">Lipid metabolism</keyword>
<keyword id="KW-1185">Reference proteome</keyword>
<keyword id="KW-0808">Transferase</keyword>
<sequence>MHEVKQPRRIMVVTGEASGDLHGAHLIEAAGKVDPGLSFFGVGGACMAKAGCEILIPGEDLAVMGLVEVLGHFPTIWRAFRKLKKILHGPQRPDALVLIDFAEFNLLLAAQAKKAGVPVLYYVSPQVWAWRRGRVRRIASVVDRLAAIFPFEPELYQGLDIDVEYVGHPLLDEFAITCERDAFLRRLGLDPARQVIGLFPGSRKNELKYIAETILQSAVKLREKHPDAQFLLPVASSFRRQDIEALVAPYGLPVTVVDEPIYDVINACDAVISVSGTVTLQVALVGTPMAIVYKMAPLSFAIGKRLIRVPHIGLANIVAGRGVVKEFIQEDATPAMISREIDAILTDAEYNRSIRGGLATVQQRMGEGGCAARVARMVSELCREIPGKERMV</sequence>
<dbReference type="EC" id="2.4.1.182" evidence="1"/>
<dbReference type="EMBL" id="CP000142">
    <property type="protein sequence ID" value="ABA88507.1"/>
    <property type="molecule type" value="Genomic_DNA"/>
</dbReference>
<dbReference type="RefSeq" id="WP_011340982.1">
    <property type="nucleotide sequence ID" value="NC_007498.2"/>
</dbReference>
<dbReference type="SMR" id="Q3A550"/>
<dbReference type="STRING" id="338963.Pcar_1258"/>
<dbReference type="CAZy" id="GT19">
    <property type="family name" value="Glycosyltransferase Family 19"/>
</dbReference>
<dbReference type="KEGG" id="pca:Pcar_1258"/>
<dbReference type="eggNOG" id="COG0763">
    <property type="taxonomic scope" value="Bacteria"/>
</dbReference>
<dbReference type="HOGENOM" id="CLU_036577_3_1_7"/>
<dbReference type="OrthoDB" id="9801642at2"/>
<dbReference type="UniPathway" id="UPA00973"/>
<dbReference type="Proteomes" id="UP000002534">
    <property type="component" value="Chromosome"/>
</dbReference>
<dbReference type="GO" id="GO:0016020">
    <property type="term" value="C:membrane"/>
    <property type="evidence" value="ECO:0007669"/>
    <property type="project" value="GOC"/>
</dbReference>
<dbReference type="GO" id="GO:0008915">
    <property type="term" value="F:lipid-A-disaccharide synthase activity"/>
    <property type="evidence" value="ECO:0007669"/>
    <property type="project" value="UniProtKB-UniRule"/>
</dbReference>
<dbReference type="GO" id="GO:0005543">
    <property type="term" value="F:phospholipid binding"/>
    <property type="evidence" value="ECO:0007669"/>
    <property type="project" value="TreeGrafter"/>
</dbReference>
<dbReference type="GO" id="GO:0009245">
    <property type="term" value="P:lipid A biosynthetic process"/>
    <property type="evidence" value="ECO:0007669"/>
    <property type="project" value="UniProtKB-UniRule"/>
</dbReference>
<dbReference type="Gene3D" id="3.40.50.2000">
    <property type="entry name" value="Glycogen Phosphorylase B"/>
    <property type="match status" value="1"/>
</dbReference>
<dbReference type="HAMAP" id="MF_00392">
    <property type="entry name" value="LpxB"/>
    <property type="match status" value="1"/>
</dbReference>
<dbReference type="InterPro" id="IPR003835">
    <property type="entry name" value="Glyco_trans_19"/>
</dbReference>
<dbReference type="NCBIfam" id="TIGR00215">
    <property type="entry name" value="lpxB"/>
    <property type="match status" value="1"/>
</dbReference>
<dbReference type="PANTHER" id="PTHR30372">
    <property type="entry name" value="LIPID-A-DISACCHARIDE SYNTHASE"/>
    <property type="match status" value="1"/>
</dbReference>
<dbReference type="PANTHER" id="PTHR30372:SF4">
    <property type="entry name" value="LIPID-A-DISACCHARIDE SYNTHASE, MITOCHONDRIAL-RELATED"/>
    <property type="match status" value="1"/>
</dbReference>
<dbReference type="Pfam" id="PF02684">
    <property type="entry name" value="LpxB"/>
    <property type="match status" value="1"/>
</dbReference>
<dbReference type="SUPFAM" id="SSF53756">
    <property type="entry name" value="UDP-Glycosyltransferase/glycogen phosphorylase"/>
    <property type="match status" value="1"/>
</dbReference>
<evidence type="ECO:0000255" key="1">
    <source>
        <dbReference type="HAMAP-Rule" id="MF_00392"/>
    </source>
</evidence>
<reference key="1">
    <citation type="submission" date="2005-10" db="EMBL/GenBank/DDBJ databases">
        <title>Complete sequence of Pelobacter carbinolicus DSM 2380.</title>
        <authorList>
            <person name="Copeland A."/>
            <person name="Lucas S."/>
            <person name="Lapidus A."/>
            <person name="Barry K."/>
            <person name="Detter J.C."/>
            <person name="Glavina T."/>
            <person name="Hammon N."/>
            <person name="Israni S."/>
            <person name="Pitluck S."/>
            <person name="Chertkov O."/>
            <person name="Schmutz J."/>
            <person name="Larimer F."/>
            <person name="Land M."/>
            <person name="Kyrpides N."/>
            <person name="Ivanova N."/>
            <person name="Richardson P."/>
        </authorList>
    </citation>
    <scope>NUCLEOTIDE SEQUENCE [LARGE SCALE GENOMIC DNA]</scope>
    <source>
        <strain>DSM 2380 / NBRC 103641 / GraBd1</strain>
    </source>
</reference>
<gene>
    <name evidence="1" type="primary">lpxB</name>
    <name type="ordered locus">Pcar_1258</name>
</gene>
<name>LPXB_SYNC1</name>
<comment type="function">
    <text evidence="1">Condensation of UDP-2,3-diacylglucosamine and 2,3-diacylglucosamine-1-phosphate to form lipid A disaccharide, a precursor of lipid A, a phosphorylated glycolipid that anchors the lipopolysaccharide to the outer membrane of the cell.</text>
</comment>
<comment type="catalytic activity">
    <reaction evidence="1">
        <text>a lipid X + a UDP-2-N,3-O-bis[(3R)-3-hydroxyacyl]-alpha-D-glucosamine = a lipid A disaccharide + UDP + H(+)</text>
        <dbReference type="Rhea" id="RHEA:67828"/>
        <dbReference type="ChEBI" id="CHEBI:15378"/>
        <dbReference type="ChEBI" id="CHEBI:58223"/>
        <dbReference type="ChEBI" id="CHEBI:137748"/>
        <dbReference type="ChEBI" id="CHEBI:176338"/>
        <dbReference type="ChEBI" id="CHEBI:176343"/>
        <dbReference type="EC" id="2.4.1.182"/>
    </reaction>
</comment>
<comment type="pathway">
    <text evidence="1">Bacterial outer membrane biogenesis; LPS lipid A biosynthesis.</text>
</comment>
<comment type="similarity">
    <text evidence="1">Belongs to the LpxB family.</text>
</comment>
<protein>
    <recommendedName>
        <fullName evidence="1">Lipid-A-disaccharide synthase</fullName>
        <ecNumber evidence="1">2.4.1.182</ecNumber>
    </recommendedName>
</protein>
<accession>Q3A550</accession>